<accession>P37743</accession>
<name>KATG_RHOCA</name>
<organism>
    <name type="scientific">Rhodobacter capsulatus</name>
    <name type="common">Rhodopseudomonas capsulata</name>
    <dbReference type="NCBI Taxonomy" id="1061"/>
    <lineage>
        <taxon>Bacteria</taxon>
        <taxon>Pseudomonadati</taxon>
        <taxon>Pseudomonadota</taxon>
        <taxon>Alphaproteobacteria</taxon>
        <taxon>Rhodobacterales</taxon>
        <taxon>Rhodobacter group</taxon>
        <taxon>Rhodobacter</taxon>
    </lineage>
</organism>
<reference key="1">
    <citation type="journal article" date="1993" name="Eur. J. Biochem.">
        <title>Molecular cloning, sequence analysis and expression of the gene for catalase-peroxidase (cpeA) from the photosynthetic bacterium Rhodobacter capsulatus B10.</title>
        <authorList>
            <person name="Forkl H."/>
            <person name="Vandekerckhove J."/>
            <person name="Drews G."/>
            <person name="Tadros M.H."/>
        </authorList>
    </citation>
    <scope>NUCLEOTIDE SEQUENCE [GENOMIC DNA]</scope>
    <scope>PARTIAL PROTEIN SEQUENCE</scope>
    <source>
        <strain>ATCC 33303 / B10</strain>
    </source>
</reference>
<reference key="2">
    <citation type="journal article" date="1987" name="J. Biol. Chem.">
        <title>Purification and characterization of a catalase-peroxidase from the photosynthetic bacterium Rhodopseudomonas capsulata.</title>
        <authorList>
            <person name="Hochman A."/>
            <person name="Shemesh A."/>
        </authorList>
    </citation>
    <scope>BIOPHYSICOCHEMICAL PROPERTIES</scope>
    <scope>HEME-BINDING</scope>
</reference>
<reference key="3">
    <citation type="journal article" date="1992" name="J. Bacteriol.">
        <title>Physiological functions of hydroperoxidases in Rhodobacter capsulatus.</title>
        <authorList>
            <person name="Hochman A."/>
            <person name="Figueredo A."/>
            <person name="Wall J.D."/>
        </authorList>
    </citation>
    <scope>FUNCTION</scope>
</reference>
<reference key="4">
    <citation type="journal article" date="2008" name="Arch. Biochem. Biophys.">
        <title>Comparative study of catalase-peroxidases (KatGs).</title>
        <authorList>
            <person name="Singh R."/>
            <person name="Wiseman B."/>
            <person name="Deemagarn T."/>
            <person name="Jha V."/>
            <person name="Switala J."/>
            <person name="Loewen P.C."/>
        </authorList>
    </citation>
    <scope>BIOPHYSICOCHEMICAL PROPERTIES</scope>
</reference>
<sequence length="576" mass="61517">MDGKDKATGKCPVMHGAMTAAGVSNTSWWPNALNLDILHQHDTKGNPLNGFDYRAAVKGLDVGLRADLHALMTDSQPWWPADWGHYGGLMIRMAWHAAGSYRAADGRGGGNTGKPARFAPLNSWPDNVSLDKARRLLWPIKKKYGNAVSWADLILFAGTVAYESMGLKTFGFGFGREDIWAPEKDVYWGAEKDWLAPSDGRYGDLAKPETMENPLAAVQMGLIYVNPEGVNGQPDPARTALHIRETFARMGMNDEETVALTAGGHTVGKAHGNGDAKALGPDPEAADVTVRALAGRTRIWAARRRRPSPRGSRAPGPRIRRAGTWAISRCSSGHDWELTKSPAGAWQWKPVTIAEEAKPLDATDLTTRHDPLMTDADMAMKVDPSTMRSVRSSWPIRPPSTTLSRAPGSSCCIATWGRRRATSAPMCPPRIWSAGPGAAGPTGWDVAKVKAQIAASGLSVADLVATAWDSARTFRQSDYRGGANGARIRLAPQKDWAGNEPERLAGACGARTDRGGAGASVADVIVLAGNLGVEQAAAGVSRWRCPSPPVAAMRAAMTDGPSLTCWSRCMTASATG</sequence>
<proteinExistence type="evidence at protein level"/>
<protein>
    <recommendedName>
        <fullName>Catalase-peroxidase</fullName>
        <shortName>CP</shortName>
        <ecNumber>1.11.1.21</ecNumber>
    </recommendedName>
    <alternativeName>
        <fullName>Hydroperoxidase I</fullName>
        <shortName>HPI</shortName>
    </alternativeName>
    <alternativeName>
        <fullName>Peroxidase/catalase</fullName>
    </alternativeName>
</protein>
<evidence type="ECO:0000250" key="1"/>
<evidence type="ECO:0000255" key="2">
    <source>
        <dbReference type="PROSITE-ProRule" id="PRU00297"/>
    </source>
</evidence>
<evidence type="ECO:0000255" key="3">
    <source>
        <dbReference type="PROSITE-ProRule" id="PRU10012"/>
    </source>
</evidence>
<evidence type="ECO:0000269" key="4">
    <source>
    </source>
</evidence>
<evidence type="ECO:0000269" key="5">
    <source>
    </source>
</evidence>
<evidence type="ECO:0000269" key="6">
    <source>
    </source>
</evidence>
<evidence type="ECO:0000305" key="7"/>
<keyword id="KW-0903">Direct protein sequencing</keyword>
<keyword id="KW-0349">Heme</keyword>
<keyword id="KW-0376">Hydrogen peroxide</keyword>
<keyword id="KW-0408">Iron</keyword>
<keyword id="KW-0479">Metal-binding</keyword>
<keyword id="KW-0560">Oxidoreductase</keyword>
<keyword id="KW-0575">Peroxidase</keyword>
<feature type="chain" id="PRO_0000055575" description="Catalase-peroxidase">
    <location>
        <begin position="1"/>
        <end position="576"/>
    </location>
</feature>
<feature type="active site" description="Proton acceptor" evidence="2 3">
    <location>
        <position position="96"/>
    </location>
</feature>
<feature type="binding site" description="axial binding residue" evidence="2">
    <location>
        <position position="265"/>
    </location>
    <ligand>
        <name>heme b</name>
        <dbReference type="ChEBI" id="CHEBI:60344"/>
    </ligand>
    <ligandPart>
        <name>Fe</name>
        <dbReference type="ChEBI" id="CHEBI:18248"/>
    </ligandPart>
</feature>
<feature type="site" description="Transition state stabilizer" evidence="2">
    <location>
        <position position="92"/>
    </location>
</feature>
<feature type="cross-link" description="Tryptophyl-tyrosyl-methioninium (Trp-Tyr) (with M-250)" evidence="1">
    <location>
        <begin position="95"/>
        <end position="224"/>
    </location>
</feature>
<feature type="cross-link" description="Tryptophyl-tyrosyl-methioninium (Tyr-Met) (with W-95)" evidence="1">
    <location>
        <begin position="224"/>
        <end position="250"/>
    </location>
</feature>
<comment type="function">
    <text evidence="4">Bifunctional enzyme with both catalase and broad-spectrum peroxidase activity. Also displays NADH oxidase, INH lyase and isonicotinoyl-NAD synthase activities. Important for stationary phase survival.</text>
</comment>
<comment type="catalytic activity">
    <reaction evidence="2">
        <text>H2O2 + AH2 = A + 2 H2O</text>
        <dbReference type="Rhea" id="RHEA:30275"/>
        <dbReference type="ChEBI" id="CHEBI:13193"/>
        <dbReference type="ChEBI" id="CHEBI:15377"/>
        <dbReference type="ChEBI" id="CHEBI:16240"/>
        <dbReference type="ChEBI" id="CHEBI:17499"/>
        <dbReference type="EC" id="1.11.1.21"/>
    </reaction>
</comment>
<comment type="catalytic activity">
    <reaction>
        <text>2 H2O2 = O2 + 2 H2O</text>
        <dbReference type="Rhea" id="RHEA:20309"/>
        <dbReference type="ChEBI" id="CHEBI:15377"/>
        <dbReference type="ChEBI" id="CHEBI:15379"/>
        <dbReference type="ChEBI" id="CHEBI:16240"/>
        <dbReference type="EC" id="1.11.1.21"/>
    </reaction>
</comment>
<comment type="cofactor">
    <cofactor>
        <name>heme b</name>
        <dbReference type="ChEBI" id="CHEBI:60344"/>
    </cofactor>
    <text>Binds 1 heme b (iron(II)-protoporphyrin IX) group per tetramer.</text>
</comment>
<comment type="biophysicochemical properties">
    <kinetics>
        <KM evidence="5 6">30 mM for H(2)O(2) for the catalase reaction (at pH 5.5-6.0)</KM>
        <KM evidence="5 6">3.7 mM for H(2)O(2) for the catalase reaction (at pH 7.0)</KM>
        <KM evidence="5 6">830 mM for H(2)O(2) for the peroxidase reaction</KM>
        <KM evidence="5 6">16 mM for ABTS for the peroxidase reaction</KM>
        <Vmax evidence="5 6">10510.0 umol/min/mg enzyme for H(2)O(2) for the catalase reaction (at pH 5.5-6.0)</Vmax>
        <Vmax evidence="5 6">5100.0 umol/min/mg enzyme for H(2)O(2) for the catalase reaction (at pH 7.0)</Vmax>
        <Vmax evidence="5 6">5.9 umol/min/mg enzyme for ABTS for the peroxidase reaction</Vmax>
    </kinetics>
    <phDependence>
        <text evidence="5 6">Optimum pH is 5.0 for the peroxidase reaction and 6-6.5 for the catalase reaction.</text>
    </phDependence>
</comment>
<comment type="subunit">
    <text>Homotetramer.</text>
</comment>
<comment type="PTM">
    <text evidence="1">Formation of the three residue Trp-Tyr-Met cross-link is important for the catalase, but not the peroxidase activity of the enzyme.</text>
</comment>
<comment type="similarity">
    <text evidence="7">Belongs to the peroxidase family. Peroxidase/catalase subfamily.</text>
</comment>
<gene>
    <name type="primary">katG</name>
    <name type="synonym">cpeA</name>
</gene>
<dbReference type="EC" id="1.11.1.21"/>
<dbReference type="EMBL" id="X71420">
    <property type="protein sequence ID" value="CAA50552.1"/>
    <property type="molecule type" value="Genomic_DNA"/>
</dbReference>
<dbReference type="PIR" id="S33327">
    <property type="entry name" value="S33327"/>
</dbReference>
<dbReference type="SMR" id="P37743"/>
<dbReference type="PeroxiBase" id="2442">
    <property type="entry name" value="RcaCP01"/>
</dbReference>
<dbReference type="GO" id="GO:0005829">
    <property type="term" value="C:cytosol"/>
    <property type="evidence" value="ECO:0007669"/>
    <property type="project" value="TreeGrafter"/>
</dbReference>
<dbReference type="GO" id="GO:0004096">
    <property type="term" value="F:catalase activity"/>
    <property type="evidence" value="ECO:0007669"/>
    <property type="project" value="InterPro"/>
</dbReference>
<dbReference type="GO" id="GO:0020037">
    <property type="term" value="F:heme binding"/>
    <property type="evidence" value="ECO:0007669"/>
    <property type="project" value="InterPro"/>
</dbReference>
<dbReference type="GO" id="GO:0046872">
    <property type="term" value="F:metal ion binding"/>
    <property type="evidence" value="ECO:0007669"/>
    <property type="project" value="UniProtKB-KW"/>
</dbReference>
<dbReference type="GO" id="GO:0070301">
    <property type="term" value="P:cellular response to hydrogen peroxide"/>
    <property type="evidence" value="ECO:0007669"/>
    <property type="project" value="TreeGrafter"/>
</dbReference>
<dbReference type="GO" id="GO:0042744">
    <property type="term" value="P:hydrogen peroxide catabolic process"/>
    <property type="evidence" value="ECO:0007669"/>
    <property type="project" value="UniProtKB-KW"/>
</dbReference>
<dbReference type="Gene3D" id="1.10.520.10">
    <property type="match status" value="2"/>
</dbReference>
<dbReference type="Gene3D" id="1.10.420.10">
    <property type="entry name" value="Peroxidase, domain 2"/>
    <property type="match status" value="1"/>
</dbReference>
<dbReference type="InterPro" id="IPR000763">
    <property type="entry name" value="Catalase_peroxidase"/>
</dbReference>
<dbReference type="InterPro" id="IPR002016">
    <property type="entry name" value="Haem_peroxidase"/>
</dbReference>
<dbReference type="InterPro" id="IPR010255">
    <property type="entry name" value="Haem_peroxidase_sf"/>
</dbReference>
<dbReference type="InterPro" id="IPR019794">
    <property type="entry name" value="Peroxidases_AS"/>
</dbReference>
<dbReference type="PANTHER" id="PTHR30555:SF6">
    <property type="entry name" value="CATALASE-PEROXIDASE"/>
    <property type="match status" value="1"/>
</dbReference>
<dbReference type="PANTHER" id="PTHR30555">
    <property type="entry name" value="HYDROPEROXIDASE I, BIFUNCTIONAL CATALASE-PEROXIDASE"/>
    <property type="match status" value="1"/>
</dbReference>
<dbReference type="Pfam" id="PF00141">
    <property type="entry name" value="peroxidase"/>
    <property type="match status" value="1"/>
</dbReference>
<dbReference type="PRINTS" id="PR00460">
    <property type="entry name" value="BPEROXIDASE"/>
</dbReference>
<dbReference type="PRINTS" id="PR00458">
    <property type="entry name" value="PEROXIDASE"/>
</dbReference>
<dbReference type="SUPFAM" id="SSF48113">
    <property type="entry name" value="Heme-dependent peroxidases"/>
    <property type="match status" value="2"/>
</dbReference>
<dbReference type="PROSITE" id="PS00436">
    <property type="entry name" value="PEROXIDASE_2"/>
    <property type="match status" value="1"/>
</dbReference>
<dbReference type="PROSITE" id="PS50873">
    <property type="entry name" value="PEROXIDASE_4"/>
    <property type="match status" value="1"/>
</dbReference>